<accession>Q7UIA7</accession>
<gene>
    <name evidence="1" type="primary">leuC</name>
    <name type="ordered locus">RB12656</name>
</gene>
<keyword id="KW-0004">4Fe-4S</keyword>
<keyword id="KW-0028">Amino-acid biosynthesis</keyword>
<keyword id="KW-0100">Branched-chain amino acid biosynthesis</keyword>
<keyword id="KW-0408">Iron</keyword>
<keyword id="KW-0411">Iron-sulfur</keyword>
<keyword id="KW-0432">Leucine biosynthesis</keyword>
<keyword id="KW-0456">Lyase</keyword>
<keyword id="KW-0479">Metal-binding</keyword>
<keyword id="KW-1185">Reference proteome</keyword>
<feature type="chain" id="PRO_0000076797" description="3-isopropylmalate dehydratase large subunit">
    <location>
        <begin position="1"/>
        <end position="485"/>
    </location>
</feature>
<feature type="region of interest" description="Disordered" evidence="2">
    <location>
        <begin position="1"/>
        <end position="20"/>
    </location>
</feature>
<feature type="region of interest" description="Disordered" evidence="2">
    <location>
        <begin position="73"/>
        <end position="92"/>
    </location>
</feature>
<feature type="binding site" evidence="1">
    <location>
        <position position="364"/>
    </location>
    <ligand>
        <name>[4Fe-4S] cluster</name>
        <dbReference type="ChEBI" id="CHEBI:49883"/>
    </ligand>
</feature>
<feature type="binding site" evidence="1">
    <location>
        <position position="424"/>
    </location>
    <ligand>
        <name>[4Fe-4S] cluster</name>
        <dbReference type="ChEBI" id="CHEBI:49883"/>
    </ligand>
</feature>
<feature type="binding site" evidence="1">
    <location>
        <position position="427"/>
    </location>
    <ligand>
        <name>[4Fe-4S] cluster</name>
        <dbReference type="ChEBI" id="CHEBI:49883"/>
    </ligand>
</feature>
<dbReference type="EC" id="4.2.1.33" evidence="1"/>
<dbReference type="EMBL" id="BX294155">
    <property type="protein sequence ID" value="CAD77707.1"/>
    <property type="status" value="ALT_INIT"/>
    <property type="molecule type" value="Genomic_DNA"/>
</dbReference>
<dbReference type="RefSeq" id="NP_870630.1">
    <property type="nucleotide sequence ID" value="NC_005027.1"/>
</dbReference>
<dbReference type="RefSeq" id="WP_007340234.1">
    <property type="nucleotide sequence ID" value="NC_005027.1"/>
</dbReference>
<dbReference type="SMR" id="Q7UIA7"/>
<dbReference type="FunCoup" id="Q7UIA7">
    <property type="interactions" value="494"/>
</dbReference>
<dbReference type="STRING" id="243090.RB12656"/>
<dbReference type="EnsemblBacteria" id="CAD77707">
    <property type="protein sequence ID" value="CAD77707"/>
    <property type="gene ID" value="RB12656"/>
</dbReference>
<dbReference type="KEGG" id="rba:RB12656"/>
<dbReference type="PATRIC" id="fig|243090.15.peg.6138"/>
<dbReference type="eggNOG" id="COG0065">
    <property type="taxonomic scope" value="Bacteria"/>
</dbReference>
<dbReference type="HOGENOM" id="CLU_006714_3_4_0"/>
<dbReference type="InParanoid" id="Q7UIA7"/>
<dbReference type="OrthoDB" id="9802769at2"/>
<dbReference type="UniPathway" id="UPA00048">
    <property type="reaction ID" value="UER00071"/>
</dbReference>
<dbReference type="Proteomes" id="UP000001025">
    <property type="component" value="Chromosome"/>
</dbReference>
<dbReference type="GO" id="GO:0003861">
    <property type="term" value="F:3-isopropylmalate dehydratase activity"/>
    <property type="evidence" value="ECO:0007669"/>
    <property type="project" value="UniProtKB-UniRule"/>
</dbReference>
<dbReference type="GO" id="GO:0051539">
    <property type="term" value="F:4 iron, 4 sulfur cluster binding"/>
    <property type="evidence" value="ECO:0007669"/>
    <property type="project" value="UniProtKB-KW"/>
</dbReference>
<dbReference type="GO" id="GO:0046872">
    <property type="term" value="F:metal ion binding"/>
    <property type="evidence" value="ECO:0007669"/>
    <property type="project" value="UniProtKB-KW"/>
</dbReference>
<dbReference type="GO" id="GO:0009098">
    <property type="term" value="P:L-leucine biosynthetic process"/>
    <property type="evidence" value="ECO:0007669"/>
    <property type="project" value="UniProtKB-UniRule"/>
</dbReference>
<dbReference type="CDD" id="cd01583">
    <property type="entry name" value="IPMI"/>
    <property type="match status" value="1"/>
</dbReference>
<dbReference type="FunFam" id="3.30.499.10:FF:000007">
    <property type="entry name" value="3-isopropylmalate dehydratase large subunit"/>
    <property type="match status" value="1"/>
</dbReference>
<dbReference type="Gene3D" id="3.30.499.10">
    <property type="entry name" value="Aconitase, domain 3"/>
    <property type="match status" value="2"/>
</dbReference>
<dbReference type="HAMAP" id="MF_01026">
    <property type="entry name" value="LeuC_type1"/>
    <property type="match status" value="1"/>
</dbReference>
<dbReference type="InterPro" id="IPR004430">
    <property type="entry name" value="3-IsopropMal_deHydase_lsu"/>
</dbReference>
<dbReference type="InterPro" id="IPR015931">
    <property type="entry name" value="Acnase/IPM_dHydase_lsu_aba_1/3"/>
</dbReference>
<dbReference type="InterPro" id="IPR001030">
    <property type="entry name" value="Acoase/IPM_deHydtase_lsu_aba"/>
</dbReference>
<dbReference type="InterPro" id="IPR018136">
    <property type="entry name" value="Aconitase_4Fe-4S_BS"/>
</dbReference>
<dbReference type="InterPro" id="IPR036008">
    <property type="entry name" value="Aconitase_4Fe-4S_dom"/>
</dbReference>
<dbReference type="InterPro" id="IPR050067">
    <property type="entry name" value="IPM_dehydratase_rel_enz"/>
</dbReference>
<dbReference type="InterPro" id="IPR033941">
    <property type="entry name" value="IPMI_cat"/>
</dbReference>
<dbReference type="NCBIfam" id="TIGR00170">
    <property type="entry name" value="leuC"/>
    <property type="match status" value="1"/>
</dbReference>
<dbReference type="NCBIfam" id="NF004016">
    <property type="entry name" value="PRK05478.1"/>
    <property type="match status" value="1"/>
</dbReference>
<dbReference type="NCBIfam" id="NF009116">
    <property type="entry name" value="PRK12466.1"/>
    <property type="match status" value="1"/>
</dbReference>
<dbReference type="PANTHER" id="PTHR43822:SF9">
    <property type="entry name" value="3-ISOPROPYLMALATE DEHYDRATASE"/>
    <property type="match status" value="1"/>
</dbReference>
<dbReference type="PANTHER" id="PTHR43822">
    <property type="entry name" value="HOMOACONITASE, MITOCHONDRIAL-RELATED"/>
    <property type="match status" value="1"/>
</dbReference>
<dbReference type="Pfam" id="PF00330">
    <property type="entry name" value="Aconitase"/>
    <property type="match status" value="1"/>
</dbReference>
<dbReference type="PRINTS" id="PR00415">
    <property type="entry name" value="ACONITASE"/>
</dbReference>
<dbReference type="SUPFAM" id="SSF53732">
    <property type="entry name" value="Aconitase iron-sulfur domain"/>
    <property type="match status" value="1"/>
</dbReference>
<dbReference type="PROSITE" id="PS00450">
    <property type="entry name" value="ACONITASE_1"/>
    <property type="match status" value="1"/>
</dbReference>
<dbReference type="PROSITE" id="PS01244">
    <property type="entry name" value="ACONITASE_2"/>
    <property type="match status" value="1"/>
</dbReference>
<protein>
    <recommendedName>
        <fullName evidence="1">3-isopropylmalate dehydratase large subunit</fullName>
        <ecNumber evidence="1">4.2.1.33</ecNumber>
    </recommendedName>
    <alternativeName>
        <fullName evidence="1">Alpha-IPM isomerase</fullName>
        <shortName evidence="1">IPMI</shortName>
    </alternativeName>
    <alternativeName>
        <fullName evidence="1">Isopropylmalate isomerase</fullName>
    </alternativeName>
</protein>
<evidence type="ECO:0000255" key="1">
    <source>
        <dbReference type="HAMAP-Rule" id="MF_01026"/>
    </source>
</evidence>
<evidence type="ECO:0000256" key="2">
    <source>
        <dbReference type="SAM" id="MobiDB-lite"/>
    </source>
</evidence>
<evidence type="ECO:0000305" key="3"/>
<reference key="1">
    <citation type="journal article" date="2003" name="Proc. Natl. Acad. Sci. U.S.A.">
        <title>Complete genome sequence of the marine planctomycete Pirellula sp. strain 1.</title>
        <authorList>
            <person name="Gloeckner F.O."/>
            <person name="Kube M."/>
            <person name="Bauer M."/>
            <person name="Teeling H."/>
            <person name="Lombardot T."/>
            <person name="Ludwig W."/>
            <person name="Gade D."/>
            <person name="Beck A."/>
            <person name="Borzym K."/>
            <person name="Heitmann K."/>
            <person name="Rabus R."/>
            <person name="Schlesner H."/>
            <person name="Amann R."/>
            <person name="Reinhardt R."/>
        </authorList>
    </citation>
    <scope>NUCLEOTIDE SEQUENCE [LARGE SCALE GENOMIC DNA]</scope>
    <source>
        <strain>DSM 10527 / NCIMB 13988 / SH1</strain>
    </source>
</reference>
<name>LEUC_RHOBA</name>
<proteinExistence type="inferred from homology"/>
<organism>
    <name type="scientific">Rhodopirellula baltica (strain DSM 10527 / NCIMB 13988 / SH1)</name>
    <dbReference type="NCBI Taxonomy" id="243090"/>
    <lineage>
        <taxon>Bacteria</taxon>
        <taxon>Pseudomonadati</taxon>
        <taxon>Planctomycetota</taxon>
        <taxon>Planctomycetia</taxon>
        <taxon>Pirellulales</taxon>
        <taxon>Pirellulaceae</taxon>
        <taxon>Rhodopirellula</taxon>
    </lineage>
</organism>
<comment type="function">
    <text evidence="1">Catalyzes the isomerization between 2-isopropylmalate and 3-isopropylmalate, via the formation of 2-isopropylmaleate.</text>
</comment>
<comment type="catalytic activity">
    <reaction evidence="1">
        <text>(2R,3S)-3-isopropylmalate = (2S)-2-isopropylmalate</text>
        <dbReference type="Rhea" id="RHEA:32287"/>
        <dbReference type="ChEBI" id="CHEBI:1178"/>
        <dbReference type="ChEBI" id="CHEBI:35121"/>
        <dbReference type="EC" id="4.2.1.33"/>
    </reaction>
</comment>
<comment type="cofactor">
    <cofactor evidence="1">
        <name>[4Fe-4S] cluster</name>
        <dbReference type="ChEBI" id="CHEBI:49883"/>
    </cofactor>
    <text evidence="1">Binds 1 [4Fe-4S] cluster per subunit.</text>
</comment>
<comment type="pathway">
    <text evidence="1">Amino-acid biosynthesis; L-leucine biosynthesis; L-leucine from 3-methyl-2-oxobutanoate: step 2/4.</text>
</comment>
<comment type="subunit">
    <text evidence="1">Heterodimer of LeuC and LeuD.</text>
</comment>
<comment type="similarity">
    <text evidence="1">Belongs to the aconitase/IPM isomerase family. LeuC type 1 subfamily.</text>
</comment>
<comment type="sequence caution" evidence="3">
    <conflict type="erroneous initiation">
        <sequence resource="EMBL-CDS" id="CAD77707"/>
    </conflict>
</comment>
<sequence length="485" mass="52379">MSDASSTAPSQAGATSQSTGSRTLLDKIWDQHLVHAPESGPAIIYIDLHLVHEVTSPQAFEGLRINNRPVRRPERTIATPDHNVPTSDRSLPIADPISRKQIETLRENCKEFGVQLFDIDDVRQGIVHVIGPENGYTQPGMTIVCGDSHTATHGAFGSLAFGIGTSEVEHVLATQTLLQFKPKTFELRVDGELARGVTAKDMILYLIGQIGTAGGTGYVLEFTGDAVRNLTMEERMTVCNMSIEAGARAGMIAPDQTTFDYLRGRPECPADFDAAVEAWKKLPSDPGATYDRSNLYKGSDIRPQVTWGTNPGQVCSVDSVVPSPGDSTDVNVQKSTASALQYMDLKAGTPITEIEINRVFIGSCTNARIEDLRAAAAVIKGHHCSDKVNAMIVPGSGKVKLQAEEEGLHKVFTDAGFDWREAGCSMCLAMNPDKLAPGERCASTSNRNFEGRQGKGGRTHLVSPAMAAAAAIKGHFVDIRDWDYR</sequence>